<dbReference type="EC" id="7.1.1.-" evidence="1"/>
<dbReference type="EMBL" id="CP000283">
    <property type="protein sequence ID" value="ABE40114.1"/>
    <property type="molecule type" value="Genomic_DNA"/>
</dbReference>
<dbReference type="SMR" id="Q135X5"/>
<dbReference type="STRING" id="316057.RPD_2886"/>
<dbReference type="KEGG" id="rpd:RPD_2886"/>
<dbReference type="eggNOG" id="COG0377">
    <property type="taxonomic scope" value="Bacteria"/>
</dbReference>
<dbReference type="HOGENOM" id="CLU_055737_7_0_5"/>
<dbReference type="BioCyc" id="RPAL316057:RPD_RS14500-MONOMER"/>
<dbReference type="Proteomes" id="UP000001818">
    <property type="component" value="Chromosome"/>
</dbReference>
<dbReference type="GO" id="GO:0005886">
    <property type="term" value="C:plasma membrane"/>
    <property type="evidence" value="ECO:0007669"/>
    <property type="project" value="UniProtKB-SubCell"/>
</dbReference>
<dbReference type="GO" id="GO:0045271">
    <property type="term" value="C:respiratory chain complex I"/>
    <property type="evidence" value="ECO:0007669"/>
    <property type="project" value="TreeGrafter"/>
</dbReference>
<dbReference type="GO" id="GO:0051539">
    <property type="term" value="F:4 iron, 4 sulfur cluster binding"/>
    <property type="evidence" value="ECO:0007669"/>
    <property type="project" value="UniProtKB-KW"/>
</dbReference>
<dbReference type="GO" id="GO:0005506">
    <property type="term" value="F:iron ion binding"/>
    <property type="evidence" value="ECO:0007669"/>
    <property type="project" value="UniProtKB-UniRule"/>
</dbReference>
<dbReference type="GO" id="GO:0008137">
    <property type="term" value="F:NADH dehydrogenase (ubiquinone) activity"/>
    <property type="evidence" value="ECO:0007669"/>
    <property type="project" value="InterPro"/>
</dbReference>
<dbReference type="GO" id="GO:0050136">
    <property type="term" value="F:NADH:ubiquinone reductase (non-electrogenic) activity"/>
    <property type="evidence" value="ECO:0007669"/>
    <property type="project" value="UniProtKB-UniRule"/>
</dbReference>
<dbReference type="GO" id="GO:0048038">
    <property type="term" value="F:quinone binding"/>
    <property type="evidence" value="ECO:0007669"/>
    <property type="project" value="UniProtKB-KW"/>
</dbReference>
<dbReference type="GO" id="GO:0009060">
    <property type="term" value="P:aerobic respiration"/>
    <property type="evidence" value="ECO:0007669"/>
    <property type="project" value="TreeGrafter"/>
</dbReference>
<dbReference type="GO" id="GO:0015990">
    <property type="term" value="P:electron transport coupled proton transport"/>
    <property type="evidence" value="ECO:0007669"/>
    <property type="project" value="TreeGrafter"/>
</dbReference>
<dbReference type="FunFam" id="3.40.50.12280:FF:000001">
    <property type="entry name" value="NADH-quinone oxidoreductase subunit B 2"/>
    <property type="match status" value="1"/>
</dbReference>
<dbReference type="Gene3D" id="3.40.50.12280">
    <property type="match status" value="1"/>
</dbReference>
<dbReference type="HAMAP" id="MF_01356">
    <property type="entry name" value="NDH1_NuoB"/>
    <property type="match status" value="1"/>
</dbReference>
<dbReference type="InterPro" id="IPR006137">
    <property type="entry name" value="NADH_UbQ_OxRdtase-like_20kDa"/>
</dbReference>
<dbReference type="InterPro" id="IPR006138">
    <property type="entry name" value="NADH_UQ_OxRdtase_20Kd_su"/>
</dbReference>
<dbReference type="NCBIfam" id="TIGR01957">
    <property type="entry name" value="nuoB_fam"/>
    <property type="match status" value="1"/>
</dbReference>
<dbReference type="NCBIfam" id="NF005012">
    <property type="entry name" value="PRK06411.1"/>
    <property type="match status" value="1"/>
</dbReference>
<dbReference type="PANTHER" id="PTHR11995">
    <property type="entry name" value="NADH DEHYDROGENASE"/>
    <property type="match status" value="1"/>
</dbReference>
<dbReference type="PANTHER" id="PTHR11995:SF14">
    <property type="entry name" value="NADH DEHYDROGENASE [UBIQUINONE] IRON-SULFUR PROTEIN 7, MITOCHONDRIAL"/>
    <property type="match status" value="1"/>
</dbReference>
<dbReference type="Pfam" id="PF01058">
    <property type="entry name" value="Oxidored_q6"/>
    <property type="match status" value="1"/>
</dbReference>
<dbReference type="SUPFAM" id="SSF56770">
    <property type="entry name" value="HydA/Nqo6-like"/>
    <property type="match status" value="1"/>
</dbReference>
<dbReference type="PROSITE" id="PS01150">
    <property type="entry name" value="COMPLEX1_20K"/>
    <property type="match status" value="1"/>
</dbReference>
<name>NUOB2_RHOPS</name>
<reference key="1">
    <citation type="submission" date="2006-03" db="EMBL/GenBank/DDBJ databases">
        <title>Complete sequence of Rhodopseudomonas palustris BisB5.</title>
        <authorList>
            <consortium name="US DOE Joint Genome Institute"/>
            <person name="Copeland A."/>
            <person name="Lucas S."/>
            <person name="Lapidus A."/>
            <person name="Barry K."/>
            <person name="Detter J.C."/>
            <person name="Glavina del Rio T."/>
            <person name="Hammon N."/>
            <person name="Israni S."/>
            <person name="Dalin E."/>
            <person name="Tice H."/>
            <person name="Pitluck S."/>
            <person name="Chain P."/>
            <person name="Malfatti S."/>
            <person name="Shin M."/>
            <person name="Vergez L."/>
            <person name="Schmutz J."/>
            <person name="Larimer F."/>
            <person name="Land M."/>
            <person name="Hauser L."/>
            <person name="Pelletier D.A."/>
            <person name="Kyrpides N."/>
            <person name="Lykidis A."/>
            <person name="Oda Y."/>
            <person name="Harwood C.S."/>
            <person name="Richardson P."/>
        </authorList>
    </citation>
    <scope>NUCLEOTIDE SEQUENCE [LARGE SCALE GENOMIC DNA]</scope>
    <source>
        <strain>BisB5</strain>
    </source>
</reference>
<protein>
    <recommendedName>
        <fullName evidence="1">NADH-quinone oxidoreductase subunit B 2</fullName>
        <ecNumber evidence="1">7.1.1.-</ecNumber>
    </recommendedName>
    <alternativeName>
        <fullName evidence="1">NADH dehydrogenase I subunit B 2</fullName>
    </alternativeName>
    <alternativeName>
        <fullName evidence="1">NDH-1 subunit B 2</fullName>
    </alternativeName>
</protein>
<organism>
    <name type="scientific">Rhodopseudomonas palustris (strain BisB5)</name>
    <dbReference type="NCBI Taxonomy" id="316057"/>
    <lineage>
        <taxon>Bacteria</taxon>
        <taxon>Pseudomonadati</taxon>
        <taxon>Pseudomonadota</taxon>
        <taxon>Alphaproteobacteria</taxon>
        <taxon>Hyphomicrobiales</taxon>
        <taxon>Nitrobacteraceae</taxon>
        <taxon>Rhodopseudomonas</taxon>
    </lineage>
</organism>
<sequence length="199" mass="21855">MQQQASAMRPEGAQPLIARAPSGIIDPNTGKPVGADDPFFLGVNRELSDKGFFVAATDDLITWARTGSLMWMTFGLACCAVEMMQLSMPRYDAERFGFAPRASPRQSDVMIVAGTLTNKMAPALRKVYDQMPEPRYVISMGSCANGGGYYHYSYSVVRGCDRIVPIDIYVPGCPPTAEALLYGVMLLQKKIRRTGTIER</sequence>
<comment type="function">
    <text evidence="1">NDH-1 shuttles electrons from NADH, via FMN and iron-sulfur (Fe-S) centers, to quinones in the respiratory chain. The immediate electron acceptor for the enzyme in this species is believed to be ubiquinone. Couples the redox reaction to proton translocation (for every two electrons transferred, four hydrogen ions are translocated across the cytoplasmic membrane), and thus conserves the redox energy in a proton gradient.</text>
</comment>
<comment type="catalytic activity">
    <reaction evidence="1">
        <text>a quinone + NADH + 5 H(+)(in) = a quinol + NAD(+) + 4 H(+)(out)</text>
        <dbReference type="Rhea" id="RHEA:57888"/>
        <dbReference type="ChEBI" id="CHEBI:15378"/>
        <dbReference type="ChEBI" id="CHEBI:24646"/>
        <dbReference type="ChEBI" id="CHEBI:57540"/>
        <dbReference type="ChEBI" id="CHEBI:57945"/>
        <dbReference type="ChEBI" id="CHEBI:132124"/>
    </reaction>
</comment>
<comment type="cofactor">
    <cofactor evidence="1">
        <name>[4Fe-4S] cluster</name>
        <dbReference type="ChEBI" id="CHEBI:49883"/>
    </cofactor>
    <text evidence="1">Binds 1 [4Fe-4S] cluster.</text>
</comment>
<comment type="subunit">
    <text evidence="1">NDH-1 is composed of 14 different subunits. Subunits NuoB, C, D, E, F, and G constitute the peripheral sector of the complex.</text>
</comment>
<comment type="subcellular location">
    <subcellularLocation>
        <location evidence="1">Cell inner membrane</location>
        <topology evidence="1">Peripheral membrane protein</topology>
        <orientation evidence="1">Cytoplasmic side</orientation>
    </subcellularLocation>
</comment>
<comment type="similarity">
    <text evidence="1">Belongs to the complex I 20 kDa subunit family.</text>
</comment>
<gene>
    <name evidence="1" type="primary">nuoB2</name>
    <name type="ordered locus">RPD_2886</name>
</gene>
<proteinExistence type="inferred from homology"/>
<feature type="chain" id="PRO_0000376343" description="NADH-quinone oxidoreductase subunit B 2">
    <location>
        <begin position="1"/>
        <end position="199"/>
    </location>
</feature>
<feature type="binding site" evidence="1">
    <location>
        <position position="78"/>
    </location>
    <ligand>
        <name>[4Fe-4S] cluster</name>
        <dbReference type="ChEBI" id="CHEBI:49883"/>
    </ligand>
</feature>
<feature type="binding site" evidence="1">
    <location>
        <position position="79"/>
    </location>
    <ligand>
        <name>[4Fe-4S] cluster</name>
        <dbReference type="ChEBI" id="CHEBI:49883"/>
    </ligand>
</feature>
<feature type="binding site" evidence="1">
    <location>
        <position position="143"/>
    </location>
    <ligand>
        <name>[4Fe-4S] cluster</name>
        <dbReference type="ChEBI" id="CHEBI:49883"/>
    </ligand>
</feature>
<feature type="binding site" evidence="1">
    <location>
        <position position="173"/>
    </location>
    <ligand>
        <name>[4Fe-4S] cluster</name>
        <dbReference type="ChEBI" id="CHEBI:49883"/>
    </ligand>
</feature>
<evidence type="ECO:0000255" key="1">
    <source>
        <dbReference type="HAMAP-Rule" id="MF_01356"/>
    </source>
</evidence>
<accession>Q135X5</accession>
<keyword id="KW-0004">4Fe-4S</keyword>
<keyword id="KW-0997">Cell inner membrane</keyword>
<keyword id="KW-1003">Cell membrane</keyword>
<keyword id="KW-0408">Iron</keyword>
<keyword id="KW-0411">Iron-sulfur</keyword>
<keyword id="KW-0472">Membrane</keyword>
<keyword id="KW-0479">Metal-binding</keyword>
<keyword id="KW-0520">NAD</keyword>
<keyword id="KW-0874">Quinone</keyword>
<keyword id="KW-1278">Translocase</keyword>
<keyword id="KW-0813">Transport</keyword>
<keyword id="KW-0830">Ubiquinone</keyword>